<organism>
    <name type="scientific">Arabidopsis thaliana</name>
    <name type="common">Mouse-ear cress</name>
    <dbReference type="NCBI Taxonomy" id="3702"/>
    <lineage>
        <taxon>Eukaryota</taxon>
        <taxon>Viridiplantae</taxon>
        <taxon>Streptophyta</taxon>
        <taxon>Embryophyta</taxon>
        <taxon>Tracheophyta</taxon>
        <taxon>Spermatophyta</taxon>
        <taxon>Magnoliopsida</taxon>
        <taxon>eudicotyledons</taxon>
        <taxon>Gunneridae</taxon>
        <taxon>Pentapetalae</taxon>
        <taxon>rosids</taxon>
        <taxon>malvids</taxon>
        <taxon>Brassicales</taxon>
        <taxon>Brassicaceae</taxon>
        <taxon>Camelineae</taxon>
        <taxon>Arabidopsis</taxon>
    </lineage>
</organism>
<name>SAE1A_ARATH</name>
<dbReference type="EMBL" id="AF510523">
    <property type="protein sequence ID" value="AAN03849.1"/>
    <property type="molecule type" value="mRNA"/>
</dbReference>
<dbReference type="EMBL" id="AL035523">
    <property type="protein sequence ID" value="CAB36736.1"/>
    <property type="status" value="ALT_SEQ"/>
    <property type="molecule type" value="Genomic_DNA"/>
</dbReference>
<dbReference type="EMBL" id="AL161562">
    <property type="protein sequence ID" value="CAB79403.1"/>
    <property type="status" value="ALT_SEQ"/>
    <property type="molecule type" value="Genomic_DNA"/>
</dbReference>
<dbReference type="EMBL" id="CP002687">
    <property type="protein sequence ID" value="AEE84978.1"/>
    <property type="molecule type" value="Genomic_DNA"/>
</dbReference>
<dbReference type="EMBL" id="AY072375">
    <property type="protein sequence ID" value="AAL62367.1"/>
    <property type="molecule type" value="mRNA"/>
</dbReference>
<dbReference type="EMBL" id="BT000094">
    <property type="protein sequence ID" value="AAN15413.1"/>
    <property type="molecule type" value="mRNA"/>
</dbReference>
<dbReference type="EMBL" id="AY086568">
    <property type="protein sequence ID" value="AAM63631.1"/>
    <property type="molecule type" value="mRNA"/>
</dbReference>
<dbReference type="PIR" id="T05515">
    <property type="entry name" value="T05515"/>
</dbReference>
<dbReference type="RefSeq" id="NP_567712.1">
    <property type="nucleotide sequence ID" value="NM_118626.3"/>
</dbReference>
<dbReference type="SMR" id="Q8VY78"/>
<dbReference type="BioGRID" id="13884">
    <property type="interactions" value="4"/>
</dbReference>
<dbReference type="FunCoup" id="Q8VY78">
    <property type="interactions" value="4789"/>
</dbReference>
<dbReference type="STRING" id="3702.Q8VY78"/>
<dbReference type="iPTMnet" id="Q8VY78"/>
<dbReference type="PaxDb" id="3702-AT4G24940.1"/>
<dbReference type="ProteomicsDB" id="232838"/>
<dbReference type="EnsemblPlants" id="AT4G24940.1">
    <property type="protein sequence ID" value="AT4G24940.1"/>
    <property type="gene ID" value="AT4G24940"/>
</dbReference>
<dbReference type="GeneID" id="828596"/>
<dbReference type="Gramene" id="AT4G24940.1">
    <property type="protein sequence ID" value="AT4G24940.1"/>
    <property type="gene ID" value="AT4G24940"/>
</dbReference>
<dbReference type="KEGG" id="ath:AT4G24940"/>
<dbReference type="Araport" id="AT4G24940"/>
<dbReference type="TAIR" id="AT4G24940">
    <property type="gene designation" value="SAE1A"/>
</dbReference>
<dbReference type="eggNOG" id="KOG2014">
    <property type="taxonomic scope" value="Eukaryota"/>
</dbReference>
<dbReference type="HOGENOM" id="CLU_002556_4_1_1"/>
<dbReference type="InParanoid" id="Q8VY78"/>
<dbReference type="OMA" id="EFFGQFD"/>
<dbReference type="OrthoDB" id="1708823at2759"/>
<dbReference type="PhylomeDB" id="Q8VY78"/>
<dbReference type="UniPathway" id="UPA00886"/>
<dbReference type="PRO" id="PR:Q8VY78"/>
<dbReference type="Proteomes" id="UP000006548">
    <property type="component" value="Chromosome 4"/>
</dbReference>
<dbReference type="ExpressionAtlas" id="Q8VY78">
    <property type="expression patterns" value="baseline and differential"/>
</dbReference>
<dbReference type="GO" id="GO:0005634">
    <property type="term" value="C:nucleus"/>
    <property type="evidence" value="ECO:0000314"/>
    <property type="project" value="TAIR"/>
</dbReference>
<dbReference type="GO" id="GO:0019948">
    <property type="term" value="F:SUMO activating enzyme activity"/>
    <property type="evidence" value="ECO:0000314"/>
    <property type="project" value="TAIR"/>
</dbReference>
<dbReference type="GO" id="GO:0016925">
    <property type="term" value="P:protein sumoylation"/>
    <property type="evidence" value="ECO:0000250"/>
    <property type="project" value="TAIR"/>
</dbReference>
<dbReference type="CDD" id="cd01492">
    <property type="entry name" value="Aos1_SUMO"/>
    <property type="match status" value="1"/>
</dbReference>
<dbReference type="FunFam" id="3.40.50.720:FF:000404">
    <property type="entry name" value="SUMO-activating enzyme subunit 1B-2"/>
    <property type="match status" value="1"/>
</dbReference>
<dbReference type="Gene3D" id="3.40.50.720">
    <property type="entry name" value="NAD(P)-binding Rossmann-like Domain"/>
    <property type="match status" value="1"/>
</dbReference>
<dbReference type="InterPro" id="IPR045886">
    <property type="entry name" value="ThiF/MoeB/HesA"/>
</dbReference>
<dbReference type="InterPro" id="IPR000594">
    <property type="entry name" value="ThiF_NAD_FAD-bd"/>
</dbReference>
<dbReference type="InterPro" id="IPR035985">
    <property type="entry name" value="Ubiquitin-activating_enz"/>
</dbReference>
<dbReference type="PANTHER" id="PTHR10953:SF162">
    <property type="entry name" value="SUMO-ACTIVATING ENZYME SUBUNIT 1"/>
    <property type="match status" value="1"/>
</dbReference>
<dbReference type="PANTHER" id="PTHR10953">
    <property type="entry name" value="UBIQUITIN-ACTIVATING ENZYME E1"/>
    <property type="match status" value="1"/>
</dbReference>
<dbReference type="Pfam" id="PF00899">
    <property type="entry name" value="ThiF"/>
    <property type="match status" value="1"/>
</dbReference>
<dbReference type="SUPFAM" id="SSF69572">
    <property type="entry name" value="Activating enzymes of the ubiquitin-like proteins"/>
    <property type="match status" value="1"/>
</dbReference>
<accession>Q8VY78</accession>
<accession>Q9SW32</accession>
<protein>
    <recommendedName>
        <fullName>SUMO-activating enzyme subunit 1A</fullName>
    </recommendedName>
    <alternativeName>
        <fullName>SUMO-activating enzyme subunit 1-1</fullName>
    </alternativeName>
    <alternativeName>
        <fullName>Ubiquitin-like 1-activating enzyme E1A</fullName>
    </alternativeName>
</protein>
<reference key="1">
    <citation type="journal article" date="2003" name="J. Biol. Chem.">
        <title>The small ubiquitin-like modifier (SUMO) protein modification system in Arabidopsis. Accumulation of SUMO1 and -2 conjugates is increased by stress.</title>
        <authorList>
            <person name="Kurepa J."/>
            <person name="Walker J.M."/>
            <person name="Smalle J."/>
            <person name="Gosink M.M."/>
            <person name="Davis S.J."/>
            <person name="Durham T.L."/>
            <person name="Sung D.Y."/>
            <person name="Vierstra R.D."/>
        </authorList>
    </citation>
    <scope>NUCLEOTIDE SEQUENCE [MRNA]</scope>
    <source>
        <strain>cv. Columbia</strain>
    </source>
</reference>
<reference key="2">
    <citation type="journal article" date="1999" name="Nature">
        <title>Sequence and analysis of chromosome 4 of the plant Arabidopsis thaliana.</title>
        <authorList>
            <person name="Mayer K.F.X."/>
            <person name="Schueller C."/>
            <person name="Wambutt R."/>
            <person name="Murphy G."/>
            <person name="Volckaert G."/>
            <person name="Pohl T."/>
            <person name="Duesterhoeft A."/>
            <person name="Stiekema W."/>
            <person name="Entian K.-D."/>
            <person name="Terryn N."/>
            <person name="Harris B."/>
            <person name="Ansorge W."/>
            <person name="Brandt P."/>
            <person name="Grivell L.A."/>
            <person name="Rieger M."/>
            <person name="Weichselgartner M."/>
            <person name="de Simone V."/>
            <person name="Obermaier B."/>
            <person name="Mache R."/>
            <person name="Mueller M."/>
            <person name="Kreis M."/>
            <person name="Delseny M."/>
            <person name="Puigdomenech P."/>
            <person name="Watson M."/>
            <person name="Schmidtheini T."/>
            <person name="Reichert B."/>
            <person name="Portetelle D."/>
            <person name="Perez-Alonso M."/>
            <person name="Boutry M."/>
            <person name="Bancroft I."/>
            <person name="Vos P."/>
            <person name="Hoheisel J."/>
            <person name="Zimmermann W."/>
            <person name="Wedler H."/>
            <person name="Ridley P."/>
            <person name="Langham S.-A."/>
            <person name="McCullagh B."/>
            <person name="Bilham L."/>
            <person name="Robben J."/>
            <person name="van der Schueren J."/>
            <person name="Grymonprez B."/>
            <person name="Chuang Y.-J."/>
            <person name="Vandenbussche F."/>
            <person name="Braeken M."/>
            <person name="Weltjens I."/>
            <person name="Voet M."/>
            <person name="Bastiaens I."/>
            <person name="Aert R."/>
            <person name="Defoor E."/>
            <person name="Weitzenegger T."/>
            <person name="Bothe G."/>
            <person name="Ramsperger U."/>
            <person name="Hilbert H."/>
            <person name="Braun M."/>
            <person name="Holzer E."/>
            <person name="Brandt A."/>
            <person name="Peters S."/>
            <person name="van Staveren M."/>
            <person name="Dirkse W."/>
            <person name="Mooijman P."/>
            <person name="Klein Lankhorst R."/>
            <person name="Rose M."/>
            <person name="Hauf J."/>
            <person name="Koetter P."/>
            <person name="Berneiser S."/>
            <person name="Hempel S."/>
            <person name="Feldpausch M."/>
            <person name="Lamberth S."/>
            <person name="Van den Daele H."/>
            <person name="De Keyser A."/>
            <person name="Buysshaert C."/>
            <person name="Gielen J."/>
            <person name="Villarroel R."/>
            <person name="De Clercq R."/>
            <person name="van Montagu M."/>
            <person name="Rogers J."/>
            <person name="Cronin A."/>
            <person name="Quail M.A."/>
            <person name="Bray-Allen S."/>
            <person name="Clark L."/>
            <person name="Doggett J."/>
            <person name="Hall S."/>
            <person name="Kay M."/>
            <person name="Lennard N."/>
            <person name="McLay K."/>
            <person name="Mayes R."/>
            <person name="Pettett A."/>
            <person name="Rajandream M.A."/>
            <person name="Lyne M."/>
            <person name="Benes V."/>
            <person name="Rechmann S."/>
            <person name="Borkova D."/>
            <person name="Bloecker H."/>
            <person name="Scharfe M."/>
            <person name="Grimm M."/>
            <person name="Loehnert T.-H."/>
            <person name="Dose S."/>
            <person name="de Haan M."/>
            <person name="Maarse A.C."/>
            <person name="Schaefer M."/>
            <person name="Mueller-Auer S."/>
            <person name="Gabel C."/>
            <person name="Fuchs M."/>
            <person name="Fartmann B."/>
            <person name="Granderath K."/>
            <person name="Dauner D."/>
            <person name="Herzl A."/>
            <person name="Neumann S."/>
            <person name="Argiriou A."/>
            <person name="Vitale D."/>
            <person name="Liguori R."/>
            <person name="Piravandi E."/>
            <person name="Massenet O."/>
            <person name="Quigley F."/>
            <person name="Clabauld G."/>
            <person name="Muendlein A."/>
            <person name="Felber R."/>
            <person name="Schnabl S."/>
            <person name="Hiller R."/>
            <person name="Schmidt W."/>
            <person name="Lecharny A."/>
            <person name="Aubourg S."/>
            <person name="Chefdor F."/>
            <person name="Cooke R."/>
            <person name="Berger C."/>
            <person name="Monfort A."/>
            <person name="Casacuberta E."/>
            <person name="Gibbons T."/>
            <person name="Weber N."/>
            <person name="Vandenbol M."/>
            <person name="Bargues M."/>
            <person name="Terol J."/>
            <person name="Torres A."/>
            <person name="Perez-Perez A."/>
            <person name="Purnelle B."/>
            <person name="Bent E."/>
            <person name="Johnson S."/>
            <person name="Tacon D."/>
            <person name="Jesse T."/>
            <person name="Heijnen L."/>
            <person name="Schwarz S."/>
            <person name="Scholler P."/>
            <person name="Heber S."/>
            <person name="Francs P."/>
            <person name="Bielke C."/>
            <person name="Frishman D."/>
            <person name="Haase D."/>
            <person name="Lemcke K."/>
            <person name="Mewes H.-W."/>
            <person name="Stocker S."/>
            <person name="Zaccaria P."/>
            <person name="Bevan M."/>
            <person name="Wilson R.K."/>
            <person name="de la Bastide M."/>
            <person name="Habermann K."/>
            <person name="Parnell L."/>
            <person name="Dedhia N."/>
            <person name="Gnoj L."/>
            <person name="Schutz K."/>
            <person name="Huang E."/>
            <person name="Spiegel L."/>
            <person name="Sekhon M."/>
            <person name="Murray J."/>
            <person name="Sheet P."/>
            <person name="Cordes M."/>
            <person name="Abu-Threideh J."/>
            <person name="Stoneking T."/>
            <person name="Kalicki J."/>
            <person name="Graves T."/>
            <person name="Harmon G."/>
            <person name="Edwards J."/>
            <person name="Latreille P."/>
            <person name="Courtney L."/>
            <person name="Cloud J."/>
            <person name="Abbott A."/>
            <person name="Scott K."/>
            <person name="Johnson D."/>
            <person name="Minx P."/>
            <person name="Bentley D."/>
            <person name="Fulton B."/>
            <person name="Miller N."/>
            <person name="Greco T."/>
            <person name="Kemp K."/>
            <person name="Kramer J."/>
            <person name="Fulton L."/>
            <person name="Mardis E."/>
            <person name="Dante M."/>
            <person name="Pepin K."/>
            <person name="Hillier L.W."/>
            <person name="Nelson J."/>
            <person name="Spieth J."/>
            <person name="Ryan E."/>
            <person name="Andrews S."/>
            <person name="Geisel C."/>
            <person name="Layman D."/>
            <person name="Du H."/>
            <person name="Ali J."/>
            <person name="Berghoff A."/>
            <person name="Jones K."/>
            <person name="Drone K."/>
            <person name="Cotton M."/>
            <person name="Joshu C."/>
            <person name="Antonoiu B."/>
            <person name="Zidanic M."/>
            <person name="Strong C."/>
            <person name="Sun H."/>
            <person name="Lamar B."/>
            <person name="Yordan C."/>
            <person name="Ma P."/>
            <person name="Zhong J."/>
            <person name="Preston R."/>
            <person name="Vil D."/>
            <person name="Shekher M."/>
            <person name="Matero A."/>
            <person name="Shah R."/>
            <person name="Swaby I.K."/>
            <person name="O'Shaughnessy A."/>
            <person name="Rodriguez M."/>
            <person name="Hoffman J."/>
            <person name="Till S."/>
            <person name="Granat S."/>
            <person name="Shohdy N."/>
            <person name="Hasegawa A."/>
            <person name="Hameed A."/>
            <person name="Lodhi M."/>
            <person name="Johnson A."/>
            <person name="Chen E."/>
            <person name="Marra M.A."/>
            <person name="Martienssen R."/>
            <person name="McCombie W.R."/>
        </authorList>
    </citation>
    <scope>NUCLEOTIDE SEQUENCE [LARGE SCALE GENOMIC DNA]</scope>
    <source>
        <strain>cv. Columbia</strain>
    </source>
</reference>
<reference key="3">
    <citation type="journal article" date="2017" name="Plant J.">
        <title>Araport11: a complete reannotation of the Arabidopsis thaliana reference genome.</title>
        <authorList>
            <person name="Cheng C.Y."/>
            <person name="Krishnakumar V."/>
            <person name="Chan A.P."/>
            <person name="Thibaud-Nissen F."/>
            <person name="Schobel S."/>
            <person name="Town C.D."/>
        </authorList>
    </citation>
    <scope>GENOME REANNOTATION</scope>
    <source>
        <strain>cv. Columbia</strain>
    </source>
</reference>
<reference key="4">
    <citation type="journal article" date="2003" name="Science">
        <title>Empirical analysis of transcriptional activity in the Arabidopsis genome.</title>
        <authorList>
            <person name="Yamada K."/>
            <person name="Lim J."/>
            <person name="Dale J.M."/>
            <person name="Chen H."/>
            <person name="Shinn P."/>
            <person name="Palm C.J."/>
            <person name="Southwick A.M."/>
            <person name="Wu H.C."/>
            <person name="Kim C.J."/>
            <person name="Nguyen M."/>
            <person name="Pham P.K."/>
            <person name="Cheuk R.F."/>
            <person name="Karlin-Newmann G."/>
            <person name="Liu S.X."/>
            <person name="Lam B."/>
            <person name="Sakano H."/>
            <person name="Wu T."/>
            <person name="Yu G."/>
            <person name="Miranda M."/>
            <person name="Quach H.L."/>
            <person name="Tripp M."/>
            <person name="Chang C.H."/>
            <person name="Lee J.M."/>
            <person name="Toriumi M.J."/>
            <person name="Chan M.M."/>
            <person name="Tang C.C."/>
            <person name="Onodera C.S."/>
            <person name="Deng J.M."/>
            <person name="Akiyama K."/>
            <person name="Ansari Y."/>
            <person name="Arakawa T."/>
            <person name="Banh J."/>
            <person name="Banno F."/>
            <person name="Bowser L."/>
            <person name="Brooks S.Y."/>
            <person name="Carninci P."/>
            <person name="Chao Q."/>
            <person name="Choy N."/>
            <person name="Enju A."/>
            <person name="Goldsmith A.D."/>
            <person name="Gurjal M."/>
            <person name="Hansen N.F."/>
            <person name="Hayashizaki Y."/>
            <person name="Johnson-Hopson C."/>
            <person name="Hsuan V.W."/>
            <person name="Iida K."/>
            <person name="Karnes M."/>
            <person name="Khan S."/>
            <person name="Koesema E."/>
            <person name="Ishida J."/>
            <person name="Jiang P.X."/>
            <person name="Jones T."/>
            <person name="Kawai J."/>
            <person name="Kamiya A."/>
            <person name="Meyers C."/>
            <person name="Nakajima M."/>
            <person name="Narusaka M."/>
            <person name="Seki M."/>
            <person name="Sakurai T."/>
            <person name="Satou M."/>
            <person name="Tamse R."/>
            <person name="Vaysberg M."/>
            <person name="Wallender E.K."/>
            <person name="Wong C."/>
            <person name="Yamamura Y."/>
            <person name="Yuan S."/>
            <person name="Shinozaki K."/>
            <person name="Davis R.W."/>
            <person name="Theologis A."/>
            <person name="Ecker J.R."/>
        </authorList>
    </citation>
    <scope>NUCLEOTIDE SEQUENCE [LARGE SCALE MRNA]</scope>
    <source>
        <strain>cv. Columbia</strain>
    </source>
</reference>
<reference key="5">
    <citation type="submission" date="2002-03" db="EMBL/GenBank/DDBJ databases">
        <title>Full-length cDNA from Arabidopsis thaliana.</title>
        <authorList>
            <person name="Brover V.V."/>
            <person name="Troukhan M.E."/>
            <person name="Alexandrov N.A."/>
            <person name="Lu Y.-P."/>
            <person name="Flavell R.B."/>
            <person name="Feldmann K.A."/>
        </authorList>
    </citation>
    <scope>NUCLEOTIDE SEQUENCE [LARGE SCALE MRNA]</scope>
</reference>
<reference key="6">
    <citation type="journal article" date="2007" name="Plant Physiol.">
        <title>Genetic analysis of SUMOylation in Arabidopsis: conjugation of SUMO1 and SUMO2 to nuclear proteins is essential.</title>
        <authorList>
            <person name="Saracco S.A."/>
            <person name="Miller M.J."/>
            <person name="Kurepa J."/>
            <person name="Vierstra R.D."/>
        </authorList>
    </citation>
    <scope>FUNCTION</scope>
    <scope>DISRUPTION PHENOTYPE</scope>
</reference>
<reference key="7">
    <citation type="journal article" date="2012" name="Mol. Cell. Proteomics">
        <title>Comparative large-scale characterisation of plant vs. mammal proteins reveals similar and idiosyncratic N-alpha acetylation features.</title>
        <authorList>
            <person name="Bienvenut W.V."/>
            <person name="Sumpton D."/>
            <person name="Martinez A."/>
            <person name="Lilla S."/>
            <person name="Espagne C."/>
            <person name="Meinnel T."/>
            <person name="Giglione C."/>
        </authorList>
    </citation>
    <scope>ACETYLATION [LARGE SCALE ANALYSIS] AT MET-1</scope>
    <scope>IDENTIFICATION BY MASS SPECTROMETRY [LARGE SCALE ANALYSIS]</scope>
</reference>
<feature type="chain" id="PRO_0000396010" description="SUMO-activating enzyme subunit 1A">
    <location>
        <begin position="1"/>
        <end position="322"/>
    </location>
</feature>
<feature type="modified residue" description="N-acetylmethionine" evidence="4">
    <location>
        <position position="1"/>
    </location>
</feature>
<comment type="function">
    <text evidence="2">The dimeric enzyme acts as an E1 ligase for SUMO1 and SUMO2. It mediates ATP-dependent activation of SUMO proteins and formation of a thioester with a conserved cysteine residue on SAE2. Functionally redundant with its paralog SAE1B.</text>
</comment>
<comment type="pathway">
    <text>Protein modification; protein sumoylation.</text>
</comment>
<comment type="subunit">
    <text evidence="1">Heterodimer of SAE1A or SAE1B and SAE2. The complex binds SUMO proteins via SAE2 (By similarity).</text>
</comment>
<comment type="subcellular location">
    <subcellularLocation>
        <location evidence="3">Nucleus</location>
    </subcellularLocation>
</comment>
<comment type="disruption phenotype">
    <text evidence="2">No visible phenotype.</text>
</comment>
<comment type="similarity">
    <text evidence="3">Belongs to the ubiquitin-activating E1 family.</text>
</comment>
<comment type="sequence caution" evidence="3">
    <conflict type="erroneous gene model prediction">
        <sequence resource="EMBL-CDS" id="CAB36736"/>
    </conflict>
</comment>
<comment type="sequence caution" evidence="3">
    <conflict type="erroneous gene model prediction">
        <sequence resource="EMBL-CDS" id="CAB79403"/>
    </conflict>
</comment>
<gene>
    <name type="primary">SAE1A</name>
    <name type="synonym">SAE1-1</name>
    <name type="ordered locus">At4g24940</name>
    <name type="ORF">F13M23.80</name>
</gene>
<proteinExistence type="evidence at protein level"/>
<keyword id="KW-0007">Acetylation</keyword>
<keyword id="KW-0436">Ligase</keyword>
<keyword id="KW-0539">Nucleus</keyword>
<keyword id="KW-1185">Reference proteome</keyword>
<keyword id="KW-0833">Ubl conjugation pathway</keyword>
<evidence type="ECO:0000250" key="1"/>
<evidence type="ECO:0000269" key="2">
    <source>
    </source>
</evidence>
<evidence type="ECO:0000305" key="3"/>
<evidence type="ECO:0007744" key="4">
    <source>
    </source>
</evidence>
<sequence length="322" mass="36123">MDGEELTEQETALYDRQIRVWGANAQRRLTKAHILVSGIKGTVAEFCKNIVLAGVGSVTLMDDRLANMEALNANFLIPPDENVYSGKTVAEICSDSLKDFNPMVRVSVEKGDLSMLGTDFFEQFDVVVIGYGSRATKKYVNEKCRKLKKRVAFYTVDCRDSCGEIFVDLQDYKYTKKKLEEMVECELNFPSFQEAISVPWKPIPRRTAKLYFAMRVIEVFEESEGRKHGECSLLDLARVLEIKKQLCEANSVSESHIPDILLERLITGTTEFPPVCAIVGGILAQEVIKAVSGKGDPLKNFFYYDGEDGKGVMEDISDSFTS</sequence>